<evidence type="ECO:0000255" key="1">
    <source>
        <dbReference type="HAMAP-Rule" id="MF_00815"/>
    </source>
</evidence>
<dbReference type="EMBL" id="CP000151">
    <property type="protein sequence ID" value="ABB06889.1"/>
    <property type="molecule type" value="Genomic_DNA"/>
</dbReference>
<dbReference type="RefSeq" id="WP_011350526.1">
    <property type="nucleotide sequence ID" value="NC_007510.1"/>
</dbReference>
<dbReference type="SMR" id="Q39KX7"/>
<dbReference type="GeneID" id="45093194"/>
<dbReference type="KEGG" id="bur:Bcep18194_A3287"/>
<dbReference type="PATRIC" id="fig|482957.22.peg.117"/>
<dbReference type="HOGENOM" id="CLU_050669_0_1_4"/>
<dbReference type="Proteomes" id="UP000002705">
    <property type="component" value="Chromosome 1"/>
</dbReference>
<dbReference type="GO" id="GO:0005886">
    <property type="term" value="C:plasma membrane"/>
    <property type="evidence" value="ECO:0007669"/>
    <property type="project" value="UniProtKB-SubCell"/>
</dbReference>
<dbReference type="GO" id="GO:0045259">
    <property type="term" value="C:proton-transporting ATP synthase complex"/>
    <property type="evidence" value="ECO:0007669"/>
    <property type="project" value="UniProtKB-KW"/>
</dbReference>
<dbReference type="GO" id="GO:0005524">
    <property type="term" value="F:ATP binding"/>
    <property type="evidence" value="ECO:0007669"/>
    <property type="project" value="UniProtKB-UniRule"/>
</dbReference>
<dbReference type="GO" id="GO:0046933">
    <property type="term" value="F:proton-transporting ATP synthase activity, rotational mechanism"/>
    <property type="evidence" value="ECO:0007669"/>
    <property type="project" value="UniProtKB-UniRule"/>
</dbReference>
<dbReference type="GO" id="GO:0042777">
    <property type="term" value="P:proton motive force-driven plasma membrane ATP synthesis"/>
    <property type="evidence" value="ECO:0007669"/>
    <property type="project" value="UniProtKB-UniRule"/>
</dbReference>
<dbReference type="CDD" id="cd12151">
    <property type="entry name" value="F1-ATPase_gamma"/>
    <property type="match status" value="1"/>
</dbReference>
<dbReference type="FunFam" id="1.10.287.80:FF:000005">
    <property type="entry name" value="ATP synthase gamma chain"/>
    <property type="match status" value="1"/>
</dbReference>
<dbReference type="Gene3D" id="3.40.1380.10">
    <property type="match status" value="1"/>
</dbReference>
<dbReference type="Gene3D" id="1.10.287.80">
    <property type="entry name" value="ATP synthase, gamma subunit, helix hairpin domain"/>
    <property type="match status" value="1"/>
</dbReference>
<dbReference type="HAMAP" id="MF_00815">
    <property type="entry name" value="ATP_synth_gamma_bact"/>
    <property type="match status" value="1"/>
</dbReference>
<dbReference type="InterPro" id="IPR035968">
    <property type="entry name" value="ATP_synth_F1_ATPase_gsu"/>
</dbReference>
<dbReference type="InterPro" id="IPR000131">
    <property type="entry name" value="ATP_synth_F1_gsu"/>
</dbReference>
<dbReference type="InterPro" id="IPR023632">
    <property type="entry name" value="ATP_synth_F1_gsu_CS"/>
</dbReference>
<dbReference type="NCBIfam" id="TIGR01146">
    <property type="entry name" value="ATPsyn_F1gamma"/>
    <property type="match status" value="1"/>
</dbReference>
<dbReference type="NCBIfam" id="NF004144">
    <property type="entry name" value="PRK05621.1-1"/>
    <property type="match status" value="1"/>
</dbReference>
<dbReference type="PANTHER" id="PTHR11693">
    <property type="entry name" value="ATP SYNTHASE GAMMA CHAIN"/>
    <property type="match status" value="1"/>
</dbReference>
<dbReference type="PANTHER" id="PTHR11693:SF22">
    <property type="entry name" value="ATP SYNTHASE SUBUNIT GAMMA, MITOCHONDRIAL"/>
    <property type="match status" value="1"/>
</dbReference>
<dbReference type="Pfam" id="PF00231">
    <property type="entry name" value="ATP-synt"/>
    <property type="match status" value="1"/>
</dbReference>
<dbReference type="PRINTS" id="PR00126">
    <property type="entry name" value="ATPASEGAMMA"/>
</dbReference>
<dbReference type="SUPFAM" id="SSF52943">
    <property type="entry name" value="ATP synthase (F1-ATPase), gamma subunit"/>
    <property type="match status" value="1"/>
</dbReference>
<dbReference type="PROSITE" id="PS00153">
    <property type="entry name" value="ATPASE_GAMMA"/>
    <property type="match status" value="1"/>
</dbReference>
<reference key="1">
    <citation type="submission" date="2005-10" db="EMBL/GenBank/DDBJ databases">
        <title>Complete sequence of chromosome 1 of Burkholderia sp. 383.</title>
        <authorList>
            <consortium name="US DOE Joint Genome Institute"/>
            <person name="Copeland A."/>
            <person name="Lucas S."/>
            <person name="Lapidus A."/>
            <person name="Barry K."/>
            <person name="Detter J.C."/>
            <person name="Glavina T."/>
            <person name="Hammon N."/>
            <person name="Israni S."/>
            <person name="Pitluck S."/>
            <person name="Chain P."/>
            <person name="Malfatti S."/>
            <person name="Shin M."/>
            <person name="Vergez L."/>
            <person name="Schmutz J."/>
            <person name="Larimer F."/>
            <person name="Land M."/>
            <person name="Kyrpides N."/>
            <person name="Lykidis A."/>
            <person name="Richardson P."/>
        </authorList>
    </citation>
    <scope>NUCLEOTIDE SEQUENCE [LARGE SCALE GENOMIC DNA]</scope>
    <source>
        <strain>ATCC 17760 / DSM 23089 / LMG 22485 / NCIMB 9086 / R18194 / 383</strain>
    </source>
</reference>
<gene>
    <name evidence="1" type="primary">atpG</name>
    <name type="ordered locus">Bcep18194_A3287</name>
</gene>
<accession>Q39KX7</accession>
<comment type="function">
    <text evidence="1">Produces ATP from ADP in the presence of a proton gradient across the membrane. The gamma chain is believed to be important in regulating ATPase activity and the flow of protons through the CF(0) complex.</text>
</comment>
<comment type="subunit">
    <text evidence="1">F-type ATPases have 2 components, CF(1) - the catalytic core - and CF(0) - the membrane proton channel. CF(1) has five subunits: alpha(3), beta(3), gamma(1), delta(1), epsilon(1). CF(0) has three main subunits: a, b and c.</text>
</comment>
<comment type="subcellular location">
    <subcellularLocation>
        <location evidence="1">Cell inner membrane</location>
        <topology evidence="1">Peripheral membrane protein</topology>
    </subcellularLocation>
</comment>
<comment type="similarity">
    <text evidence="1">Belongs to the ATPase gamma chain family.</text>
</comment>
<feature type="chain" id="PRO_1000053175" description="ATP synthase gamma chain">
    <location>
        <begin position="1"/>
        <end position="291"/>
    </location>
</feature>
<protein>
    <recommendedName>
        <fullName evidence="1">ATP synthase gamma chain</fullName>
    </recommendedName>
    <alternativeName>
        <fullName evidence="1">ATP synthase F1 sector gamma subunit</fullName>
    </alternativeName>
    <alternativeName>
        <fullName evidence="1">F-ATPase gamma subunit</fullName>
    </alternativeName>
</protein>
<name>ATPG_BURL3</name>
<organism>
    <name type="scientific">Burkholderia lata (strain ATCC 17760 / DSM 23089 / LMG 22485 / NCIMB 9086 / R18194 / 383)</name>
    <dbReference type="NCBI Taxonomy" id="482957"/>
    <lineage>
        <taxon>Bacteria</taxon>
        <taxon>Pseudomonadati</taxon>
        <taxon>Pseudomonadota</taxon>
        <taxon>Betaproteobacteria</taxon>
        <taxon>Burkholderiales</taxon>
        <taxon>Burkholderiaceae</taxon>
        <taxon>Burkholderia</taxon>
        <taxon>Burkholderia cepacia complex</taxon>
    </lineage>
</organism>
<proteinExistence type="inferred from homology"/>
<keyword id="KW-0066">ATP synthesis</keyword>
<keyword id="KW-0997">Cell inner membrane</keyword>
<keyword id="KW-1003">Cell membrane</keyword>
<keyword id="KW-0139">CF(1)</keyword>
<keyword id="KW-0375">Hydrogen ion transport</keyword>
<keyword id="KW-0406">Ion transport</keyword>
<keyword id="KW-0472">Membrane</keyword>
<keyword id="KW-0813">Transport</keyword>
<sequence length="291" mass="31839">MAGMKEIRGKIKSVQNTRKITKAMEMVAASKMRRAQERMRAARPYADKVRAIAAHMSRANPEYRHPFMVANEGAKTAGIILVTTDKGLCGGLNTNVLRATVQKFKELEEKGQKVEATAIGSKGLGFLNRFGAKVLSQVVHLGDTPHLDKLIGAVKTQLDLYSEGKLSAVYIAYTRFVNTMKQEAVIEQLLPLSSEHFEADDGTPATSWDYIYEPDAQAVVDELLVRYVEALVYQAVAENMASEQSARMVAMKAASDNAKTVISELQLVYNKSRQAAITKELSEIVGGAAAV</sequence>